<name>ASSY_STRCL</name>
<keyword id="KW-0028">Amino-acid biosynthesis</keyword>
<keyword id="KW-0055">Arginine biosynthesis</keyword>
<keyword id="KW-0067">ATP-binding</keyword>
<keyword id="KW-0963">Cytoplasm</keyword>
<keyword id="KW-0436">Ligase</keyword>
<keyword id="KW-0547">Nucleotide-binding</keyword>
<dbReference type="EC" id="6.3.4.5" evidence="1"/>
<dbReference type="EMBL" id="Z49111">
    <property type="protein sequence ID" value="CAA88926.1"/>
    <property type="molecule type" value="Genomic_DNA"/>
</dbReference>
<dbReference type="PIR" id="JC4548">
    <property type="entry name" value="JC4548"/>
</dbReference>
<dbReference type="RefSeq" id="WP_003958364.1">
    <property type="nucleotide sequence ID" value="NZ_CM000913.1"/>
</dbReference>
<dbReference type="SMR" id="P50986"/>
<dbReference type="STRING" id="1901.BB341_23965"/>
<dbReference type="GeneID" id="93732532"/>
<dbReference type="eggNOG" id="COG0137">
    <property type="taxonomic scope" value="Bacteria"/>
</dbReference>
<dbReference type="UniPathway" id="UPA00068">
    <property type="reaction ID" value="UER00113"/>
</dbReference>
<dbReference type="GO" id="GO:0005737">
    <property type="term" value="C:cytoplasm"/>
    <property type="evidence" value="ECO:0007669"/>
    <property type="project" value="UniProtKB-SubCell"/>
</dbReference>
<dbReference type="GO" id="GO:0004055">
    <property type="term" value="F:argininosuccinate synthase activity"/>
    <property type="evidence" value="ECO:0007669"/>
    <property type="project" value="UniProtKB-UniRule"/>
</dbReference>
<dbReference type="GO" id="GO:0005524">
    <property type="term" value="F:ATP binding"/>
    <property type="evidence" value="ECO:0007669"/>
    <property type="project" value="UniProtKB-UniRule"/>
</dbReference>
<dbReference type="GO" id="GO:0000053">
    <property type="term" value="P:argininosuccinate metabolic process"/>
    <property type="evidence" value="ECO:0007669"/>
    <property type="project" value="TreeGrafter"/>
</dbReference>
<dbReference type="GO" id="GO:0006526">
    <property type="term" value="P:L-arginine biosynthetic process"/>
    <property type="evidence" value="ECO:0007669"/>
    <property type="project" value="UniProtKB-UniRule"/>
</dbReference>
<dbReference type="GO" id="GO:0000050">
    <property type="term" value="P:urea cycle"/>
    <property type="evidence" value="ECO:0007669"/>
    <property type="project" value="TreeGrafter"/>
</dbReference>
<dbReference type="CDD" id="cd01999">
    <property type="entry name" value="ASS"/>
    <property type="match status" value="1"/>
</dbReference>
<dbReference type="FunFam" id="3.40.50.620:FF:000038">
    <property type="entry name" value="Argininosuccinate synthase"/>
    <property type="match status" value="1"/>
</dbReference>
<dbReference type="FunFam" id="3.90.1260.10:FF:000007">
    <property type="entry name" value="Argininosuccinate synthase"/>
    <property type="match status" value="1"/>
</dbReference>
<dbReference type="Gene3D" id="3.90.1260.10">
    <property type="entry name" value="Argininosuccinate synthetase, chain A, domain 2"/>
    <property type="match status" value="1"/>
</dbReference>
<dbReference type="Gene3D" id="3.40.50.620">
    <property type="entry name" value="HUPs"/>
    <property type="match status" value="1"/>
</dbReference>
<dbReference type="Gene3D" id="1.20.5.470">
    <property type="entry name" value="Single helix bin"/>
    <property type="match status" value="1"/>
</dbReference>
<dbReference type="HAMAP" id="MF_00005">
    <property type="entry name" value="Arg_succ_synth_type1"/>
    <property type="match status" value="1"/>
</dbReference>
<dbReference type="InterPro" id="IPR048268">
    <property type="entry name" value="Arginosuc_syn_C"/>
</dbReference>
<dbReference type="InterPro" id="IPR048267">
    <property type="entry name" value="Arginosuc_syn_N"/>
</dbReference>
<dbReference type="InterPro" id="IPR001518">
    <property type="entry name" value="Arginosuc_synth"/>
</dbReference>
<dbReference type="InterPro" id="IPR018223">
    <property type="entry name" value="Arginosuc_synth_CS"/>
</dbReference>
<dbReference type="InterPro" id="IPR023434">
    <property type="entry name" value="Arginosuc_synth_type_1_subfam"/>
</dbReference>
<dbReference type="InterPro" id="IPR024074">
    <property type="entry name" value="AS_cat/multimer_dom_body"/>
</dbReference>
<dbReference type="InterPro" id="IPR014729">
    <property type="entry name" value="Rossmann-like_a/b/a_fold"/>
</dbReference>
<dbReference type="NCBIfam" id="TIGR00032">
    <property type="entry name" value="argG"/>
    <property type="match status" value="1"/>
</dbReference>
<dbReference type="NCBIfam" id="NF001770">
    <property type="entry name" value="PRK00509.1"/>
    <property type="match status" value="1"/>
</dbReference>
<dbReference type="PANTHER" id="PTHR11587">
    <property type="entry name" value="ARGININOSUCCINATE SYNTHASE"/>
    <property type="match status" value="1"/>
</dbReference>
<dbReference type="PANTHER" id="PTHR11587:SF2">
    <property type="entry name" value="ARGININOSUCCINATE SYNTHASE"/>
    <property type="match status" value="1"/>
</dbReference>
<dbReference type="Pfam" id="PF20979">
    <property type="entry name" value="Arginosuc_syn_C"/>
    <property type="match status" value="1"/>
</dbReference>
<dbReference type="Pfam" id="PF00764">
    <property type="entry name" value="Arginosuc_synth"/>
    <property type="match status" value="1"/>
</dbReference>
<dbReference type="SUPFAM" id="SSF52402">
    <property type="entry name" value="Adenine nucleotide alpha hydrolases-like"/>
    <property type="match status" value="1"/>
</dbReference>
<dbReference type="SUPFAM" id="SSF69864">
    <property type="entry name" value="Argininosuccinate synthetase, C-terminal domain"/>
    <property type="match status" value="1"/>
</dbReference>
<dbReference type="PROSITE" id="PS00564">
    <property type="entry name" value="ARGININOSUCCIN_SYN_1"/>
    <property type="match status" value="1"/>
</dbReference>
<dbReference type="PROSITE" id="PS00565">
    <property type="entry name" value="ARGININOSUCCIN_SYN_2"/>
    <property type="match status" value="1"/>
</dbReference>
<accession>P50986</accession>
<feature type="chain" id="PRO_0000148646" description="Argininosuccinate synthase">
    <location>
        <begin position="1"/>
        <end position="397"/>
    </location>
</feature>
<feature type="binding site" evidence="1">
    <location>
        <begin position="8"/>
        <end position="16"/>
    </location>
    <ligand>
        <name>ATP</name>
        <dbReference type="ChEBI" id="CHEBI:30616"/>
    </ligand>
</feature>
<feature type="binding site" evidence="1">
    <location>
        <position position="87"/>
    </location>
    <ligand>
        <name>L-citrulline</name>
        <dbReference type="ChEBI" id="CHEBI:57743"/>
    </ligand>
</feature>
<feature type="binding site" evidence="1">
    <location>
        <position position="117"/>
    </location>
    <ligand>
        <name>ATP</name>
        <dbReference type="ChEBI" id="CHEBI:30616"/>
    </ligand>
</feature>
<feature type="binding site" evidence="1">
    <location>
        <position position="119"/>
    </location>
    <ligand>
        <name>L-aspartate</name>
        <dbReference type="ChEBI" id="CHEBI:29991"/>
    </ligand>
</feature>
<feature type="binding site" evidence="1">
    <location>
        <position position="123"/>
    </location>
    <ligand>
        <name>L-aspartate</name>
        <dbReference type="ChEBI" id="CHEBI:29991"/>
    </ligand>
</feature>
<feature type="binding site" evidence="1">
    <location>
        <position position="123"/>
    </location>
    <ligand>
        <name>L-citrulline</name>
        <dbReference type="ChEBI" id="CHEBI:57743"/>
    </ligand>
</feature>
<feature type="binding site" evidence="1">
    <location>
        <position position="124"/>
    </location>
    <ligand>
        <name>L-aspartate</name>
        <dbReference type="ChEBI" id="CHEBI:29991"/>
    </ligand>
</feature>
<feature type="binding site" evidence="1">
    <location>
        <position position="127"/>
    </location>
    <ligand>
        <name>L-citrulline</name>
        <dbReference type="ChEBI" id="CHEBI:57743"/>
    </ligand>
</feature>
<feature type="binding site" evidence="1">
    <location>
        <position position="175"/>
    </location>
    <ligand>
        <name>L-citrulline</name>
        <dbReference type="ChEBI" id="CHEBI:57743"/>
    </ligand>
</feature>
<feature type="binding site" evidence="1">
    <location>
        <position position="259"/>
    </location>
    <ligand>
        <name>L-citrulline</name>
        <dbReference type="ChEBI" id="CHEBI:57743"/>
    </ligand>
</feature>
<feature type="binding site" evidence="1">
    <location>
        <position position="271"/>
    </location>
    <ligand>
        <name>L-citrulline</name>
        <dbReference type="ChEBI" id="CHEBI:57743"/>
    </ligand>
</feature>
<sequence length="397" mass="43278">MTERVVLAYSGGLDTSVAIGWIAEETGAEVIAVAVDVGQGGEDLDVIRKRALACGAVEAEVADAKDEFAEEYCLPAIKANARYMDRYPLVSALSRPAIVKHLVAAAKKHDASIVAHGCTGKGNDQVRFEAGIQALGPDLKCIAPVRDYAMTRDKAIAFCEAKQLPIATTKKSPYSIDQNVFGRAIETGFLEDIWNAPIEDIFEYTSNPAEPREADEVVISFASGVPVAIDGRPVTVLQAIQQLNERAGAQGIGRIDMVEDRLVGIKSREVYEAPGAIALITAHQELENVTVERELARFKRQVEQRWGELVYDGLWFSPLKRALDGFIEEANQQVTGDIRMTLHAGTAVVTGRRSERSLYDFDLATYDTGDTFDQSKAQGFIDIFALSAKIAAKRDLV</sequence>
<comment type="catalytic activity">
    <reaction evidence="1">
        <text>L-citrulline + L-aspartate + ATP = 2-(N(omega)-L-arginino)succinate + AMP + diphosphate + H(+)</text>
        <dbReference type="Rhea" id="RHEA:10932"/>
        <dbReference type="ChEBI" id="CHEBI:15378"/>
        <dbReference type="ChEBI" id="CHEBI:29991"/>
        <dbReference type="ChEBI" id="CHEBI:30616"/>
        <dbReference type="ChEBI" id="CHEBI:33019"/>
        <dbReference type="ChEBI" id="CHEBI:57472"/>
        <dbReference type="ChEBI" id="CHEBI:57743"/>
        <dbReference type="ChEBI" id="CHEBI:456215"/>
        <dbReference type="EC" id="6.3.4.5"/>
    </reaction>
</comment>
<comment type="pathway">
    <text evidence="1">Amino-acid biosynthesis; L-arginine biosynthesis; L-arginine from L-ornithine and carbamoyl phosphate: step 2/3.</text>
</comment>
<comment type="subunit">
    <text evidence="1">Homotetramer.</text>
</comment>
<comment type="subcellular location">
    <subcellularLocation>
        <location evidence="1">Cytoplasm</location>
    </subcellularLocation>
</comment>
<comment type="similarity">
    <text evidence="1">Belongs to the argininosuccinate synthase family. Type 1 subfamily.</text>
</comment>
<gene>
    <name evidence="1" type="primary">argG</name>
</gene>
<reference key="1">
    <citation type="journal article" date="1995" name="Gene">
        <title>The argG gene of Streptomyces clavuligerus has low homology to unstable argG from other actinomycetes: effect of amplification on clavulanic acid biosynthesis.</title>
        <authorList>
            <person name="Rodriguez-Garcia A."/>
            <person name="Martin J.F."/>
            <person name="Liras P."/>
        </authorList>
    </citation>
    <scope>NUCLEOTIDE SEQUENCE [GENOMIC DNA]</scope>
    <source>
        <strain>ATCC 27064 / DSM 738 / JCM 4710 / NBRC 13307 / NCIMB 12785 / NRRL 3585 / VKM Ac-602</strain>
    </source>
</reference>
<proteinExistence type="inferred from homology"/>
<protein>
    <recommendedName>
        <fullName evidence="1">Argininosuccinate synthase</fullName>
        <ecNumber evidence="1">6.3.4.5</ecNumber>
    </recommendedName>
    <alternativeName>
        <fullName evidence="1">Citrulline--aspartate ligase</fullName>
    </alternativeName>
</protein>
<organism>
    <name type="scientific">Streptomyces clavuligerus</name>
    <dbReference type="NCBI Taxonomy" id="1901"/>
    <lineage>
        <taxon>Bacteria</taxon>
        <taxon>Bacillati</taxon>
        <taxon>Actinomycetota</taxon>
        <taxon>Actinomycetes</taxon>
        <taxon>Kitasatosporales</taxon>
        <taxon>Streptomycetaceae</taxon>
        <taxon>Streptomyces</taxon>
    </lineage>
</organism>
<evidence type="ECO:0000255" key="1">
    <source>
        <dbReference type="HAMAP-Rule" id="MF_00005"/>
    </source>
</evidence>